<dbReference type="EMBL" id="KC257461">
    <property type="protein sequence ID" value="AGF36996.1"/>
    <property type="molecule type" value="Genomic_DNA"/>
</dbReference>
<dbReference type="EMBL" id="MT903340">
    <property type="protein sequence ID" value="QNP12962.1"/>
    <property type="molecule type" value="Genomic_DNA"/>
</dbReference>
<dbReference type="RefSeq" id="NP_536519.1">
    <property type="nucleotide sequence ID" value="NC_003310.1"/>
</dbReference>
<dbReference type="RefSeq" id="YP_010377089.1">
    <property type="nucleotide sequence ID" value="NC_063383.1"/>
</dbReference>
<dbReference type="SMR" id="A0A7H0DN79"/>
<dbReference type="GeneID" id="72551502"/>
<dbReference type="GeneID" id="928891"/>
<dbReference type="KEGG" id="vg:928891"/>
<dbReference type="Proteomes" id="UP000516359">
    <property type="component" value="Genome"/>
</dbReference>
<dbReference type="GO" id="GO:0044167">
    <property type="term" value="C:host cell endoplasmic reticulum membrane"/>
    <property type="evidence" value="ECO:0007669"/>
    <property type="project" value="UniProtKB-SubCell"/>
</dbReference>
<dbReference type="GO" id="GO:0016020">
    <property type="term" value="C:membrane"/>
    <property type="evidence" value="ECO:0007669"/>
    <property type="project" value="UniProtKB-KW"/>
</dbReference>
<dbReference type="GO" id="GO:0055036">
    <property type="term" value="C:virion membrane"/>
    <property type="evidence" value="ECO:0007669"/>
    <property type="project" value="UniProtKB-SubCell"/>
</dbReference>
<dbReference type="GO" id="GO:0039663">
    <property type="term" value="P:membrane fusion involved in viral entry into host cell"/>
    <property type="evidence" value="ECO:0007669"/>
    <property type="project" value="UniProtKB-KW"/>
</dbReference>
<dbReference type="GO" id="GO:0046718">
    <property type="term" value="P:symbiont entry into host cell"/>
    <property type="evidence" value="ECO:0007669"/>
    <property type="project" value="UniProtKB-KW"/>
</dbReference>
<dbReference type="InterPro" id="IPR005023">
    <property type="entry name" value="Pox_LP_H2"/>
</dbReference>
<dbReference type="Pfam" id="PF03356">
    <property type="entry name" value="Pox_LP_H2"/>
    <property type="match status" value="1"/>
</dbReference>
<reference key="1">
    <citation type="journal article" date="2013" name="Am. J. Trop. Med. Hyg.">
        <title>Detection of human monkeypox in the republic of the congo following intensive community education.</title>
        <authorList>
            <person name="Reynolds M.G."/>
            <person name="Emerson G.L."/>
            <person name="Pukuta E."/>
            <person name="Karhemere S."/>
            <person name="Muyembe J.J."/>
            <person name="Bikindou A."/>
            <person name="McCollum A.M."/>
            <person name="Moses C."/>
            <person name="Wilkins K."/>
            <person name="Zhao H."/>
            <person name="Damon I.K."/>
            <person name="Karem K.L."/>
            <person name="Li Y."/>
            <person name="Carroll D.S."/>
            <person name="Mombouli J.V."/>
        </authorList>
    </citation>
    <scope>NUCLEOTIDE SEQUENCE [GENOMIC DNA]</scope>
    <source>
        <strain>ROC2010</strain>
    </source>
</reference>
<reference key="2">
    <citation type="journal article" date="2022" name="J. Infect. Dis.">
        <title>Exportation of Monkeypox virus from the African continent.</title>
        <authorList>
            <person name="Mauldin M.R."/>
            <person name="McCollum A.M."/>
            <person name="Nakazawa Y.J."/>
            <person name="Mandra A."/>
            <person name="Whitehouse E.R."/>
            <person name="Davidson W."/>
            <person name="Zhao H."/>
            <person name="Gao J."/>
            <person name="Li Y."/>
            <person name="Doty J."/>
            <person name="Yinka-Ogunleye A."/>
            <person name="Akinpelu A."/>
            <person name="Aruna O."/>
            <person name="Naidoo D."/>
            <person name="Lewandowski K."/>
            <person name="Afrough B."/>
            <person name="Graham V."/>
            <person name="Aarons E."/>
            <person name="Hewson R."/>
            <person name="Vipond R."/>
            <person name="Dunning J."/>
            <person name="Chand M."/>
            <person name="Brown C."/>
            <person name="Cohen-Gihon I."/>
            <person name="Erez N."/>
            <person name="Shifman O."/>
            <person name="Israeli O."/>
            <person name="Sharon M."/>
            <person name="Schwartz E."/>
            <person name="Beth-Din A."/>
            <person name="Zvi A."/>
            <person name="Mak T.M."/>
            <person name="Ng Y.K."/>
            <person name="Cui L."/>
            <person name="Lin R.T.P."/>
            <person name="Olson V.A."/>
            <person name="Brooks T."/>
            <person name="Paran N."/>
            <person name="Ihekweazu C."/>
            <person name="Reynolds M.G."/>
        </authorList>
    </citation>
    <scope>NUCLEOTIDE SEQUENCE [LARGE SCALE GENOMIC DNA]</scope>
    <source>
        <strain>MPXV-M5312_HM12_Rivers</strain>
    </source>
</reference>
<protein>
    <recommendedName>
        <fullName evidence="5">MPXVgp092</fullName>
    </recommendedName>
</protein>
<organism>
    <name type="scientific">Monkeypox virus</name>
    <dbReference type="NCBI Taxonomy" id="10244"/>
    <lineage>
        <taxon>Viruses</taxon>
        <taxon>Varidnaviria</taxon>
        <taxon>Bamfordvirae</taxon>
        <taxon>Nucleocytoviricota</taxon>
        <taxon>Pokkesviricetes</taxon>
        <taxon>Chitovirales</taxon>
        <taxon>Poxviridae</taxon>
        <taxon>Chordopoxvirinae</taxon>
        <taxon>Orthopoxvirus</taxon>
    </lineage>
</organism>
<accession>A0A7H0DN79</accession>
<feature type="chain" id="PRO_0000457423" description="MPXVgp092">
    <location>
        <begin position="1"/>
        <end position="189"/>
    </location>
</feature>
<feature type="topological domain" description="Intravirion" evidence="3">
    <location>
        <begin position="1"/>
        <end position="28"/>
    </location>
</feature>
<feature type="transmembrane region" description="Helical" evidence="3">
    <location>
        <begin position="29"/>
        <end position="49"/>
    </location>
</feature>
<feature type="topological domain" description="Virion surface" evidence="3">
    <location>
        <begin position="50"/>
        <end position="189"/>
    </location>
</feature>
<proteinExistence type="inferred from homology"/>
<sequence>MDKTTLSVNACNLEYVREKAIVGVQAAKTSTLIFFVIILAISALLLWFQTSDNPVFNELTRYMRIKNTVNDWKSLTDSKTKLESDRGRLLAAGKDDIFEFKCVDFGAYFIAMRLDKKTYLPQAIRRGTGDAWMVKKAAKVDPSAQQFCQYLIKHKSNNVITCGNEMLNELGYSGYFMSPHWCSDLSNME</sequence>
<evidence type="ECO:0000250" key="1"/>
<evidence type="ECO:0000250" key="2">
    <source>
        <dbReference type="UniProtKB" id="P08583"/>
    </source>
</evidence>
<evidence type="ECO:0000255" key="3"/>
<evidence type="ECO:0000305" key="4"/>
<evidence type="ECO:0000312" key="5">
    <source>
        <dbReference type="EMBL" id="QNP12962.1"/>
    </source>
</evidence>
<name>PG107_MONPV</name>
<gene>
    <name type="primary">OPG107</name>
    <name type="ORF">MPXVgp092</name>
</gene>
<keyword id="KW-1015">Disulfide bond</keyword>
<keyword id="KW-1168">Fusion of virus membrane with host membrane</keyword>
<keyword id="KW-1038">Host endoplasmic reticulum</keyword>
<keyword id="KW-1043">Host membrane</keyword>
<keyword id="KW-0426">Late protein</keyword>
<keyword id="KW-0472">Membrane</keyword>
<keyword id="KW-1185">Reference proteome</keyword>
<keyword id="KW-0735">Signal-anchor</keyword>
<keyword id="KW-0812">Transmembrane</keyword>
<keyword id="KW-1133">Transmembrane helix</keyword>
<keyword id="KW-1162">Viral penetration into host cytoplasm</keyword>
<keyword id="KW-0946">Virion</keyword>
<keyword id="KW-1160">Virus entry into host cell</keyword>
<organismHost>
    <name type="scientific">Cynomys gunnisoni</name>
    <name type="common">Gunnison's prairie dog</name>
    <name type="synonym">Spermophilus gunnisoni</name>
    <dbReference type="NCBI Taxonomy" id="45479"/>
</organismHost>
<organismHost>
    <name type="scientific">Cynomys leucurus</name>
    <name type="common">White-tailed prairie dog</name>
    <dbReference type="NCBI Taxonomy" id="99825"/>
</organismHost>
<organismHost>
    <name type="scientific">Cynomys ludovicianus</name>
    <name type="common">Black-tailed prairie dog</name>
    <dbReference type="NCBI Taxonomy" id="45480"/>
</organismHost>
<organismHost>
    <name type="scientific">Cynomys mexicanus</name>
    <name type="common">Mexican prairie dog</name>
    <dbReference type="NCBI Taxonomy" id="99826"/>
</organismHost>
<organismHost>
    <name type="scientific">Cynomys parvidens</name>
    <name type="common">Utah prairie dog</name>
    <dbReference type="NCBI Taxonomy" id="99827"/>
</organismHost>
<organismHost>
    <name type="scientific">Gliridae</name>
    <name type="common">dormice</name>
    <dbReference type="NCBI Taxonomy" id="30650"/>
</organismHost>
<organismHost>
    <name type="scientific">Heliosciurus ruwenzorii</name>
    <name type="common">Ruwenzori sun squirrel</name>
    <dbReference type="NCBI Taxonomy" id="226685"/>
</organismHost>
<organismHost>
    <name type="scientific">Homo sapiens</name>
    <name type="common">Human</name>
    <dbReference type="NCBI Taxonomy" id="9606"/>
</organismHost>
<organismHost>
    <name type="scientific">Mus musculus</name>
    <name type="common">Mouse</name>
    <dbReference type="NCBI Taxonomy" id="10090"/>
</organismHost>
<comment type="function">
    <text evidence="2">Envelope protein part of the entry-fusion complex responsible for the virus membrane fusion with host cell membrane during virus entry. Also plays a role in cell-cell fusion (syncytium formation).</text>
</comment>
<comment type="subunit">
    <text evidence="2">Part of a stable entry-fusion complex (EFC) which is at least composed of proteins OPG143, OPG147, OPG155, OPG86, OPG94, OPG107, OPG104, and OPG099. Formation of the viral membrane is necessary for the assembly of the complex.</text>
</comment>
<comment type="subcellular location">
    <subcellularLocation>
        <location evidence="2">Virion membrane</location>
        <topology evidence="2">Single-pass type III membrane protein</topology>
    </subcellularLocation>
    <subcellularLocation>
        <location evidence="2">Host endoplasmic reticulum membrane</location>
    </subcellularLocation>
    <text evidence="1">Component of the mature virion (MV) membrane (By similarity). The mature virion is located in the cytoplasm of infected cells and is probably released by cell lysis.</text>
</comment>
<comment type="PTM">
    <text evidence="2">Contains two intramolecular disulfide bonds. They are created by the viral disulfide bond formation pathway, a poxvirus-specific pathway that operates on the cytoplasmic side of the MV membranes.</text>
</comment>
<comment type="similarity">
    <text evidence="4">Belongs to the orthopoxvirus OPG107 family.</text>
</comment>